<feature type="chain" id="PRO_0000150696" description="Olfactory receptor 10G3">
    <location>
        <begin position="1"/>
        <end position="313"/>
    </location>
</feature>
<feature type="topological domain" description="Extracellular" evidence="1">
    <location>
        <begin position="1"/>
        <end position="25"/>
    </location>
</feature>
<feature type="transmembrane region" description="Helical; Name=1" evidence="1">
    <location>
        <begin position="26"/>
        <end position="46"/>
    </location>
</feature>
<feature type="topological domain" description="Cytoplasmic" evidence="1">
    <location>
        <begin position="47"/>
        <end position="54"/>
    </location>
</feature>
<feature type="transmembrane region" description="Helical; Name=2" evidence="1">
    <location>
        <begin position="55"/>
        <end position="76"/>
    </location>
</feature>
<feature type="topological domain" description="Extracellular" evidence="1">
    <location>
        <begin position="77"/>
        <end position="100"/>
    </location>
</feature>
<feature type="transmembrane region" description="Helical; Name=3" evidence="1">
    <location>
        <begin position="101"/>
        <end position="121"/>
    </location>
</feature>
<feature type="topological domain" description="Cytoplasmic" evidence="1">
    <location>
        <begin position="122"/>
        <end position="140"/>
    </location>
</feature>
<feature type="transmembrane region" description="Helical; Name=4" evidence="1">
    <location>
        <begin position="141"/>
        <end position="161"/>
    </location>
</feature>
<feature type="topological domain" description="Extracellular" evidence="1">
    <location>
        <begin position="162"/>
        <end position="198"/>
    </location>
</feature>
<feature type="transmembrane region" description="Helical; Name=5" evidence="1">
    <location>
        <begin position="199"/>
        <end position="218"/>
    </location>
</feature>
<feature type="topological domain" description="Cytoplasmic" evidence="1">
    <location>
        <begin position="219"/>
        <end position="238"/>
    </location>
</feature>
<feature type="transmembrane region" description="Helical; Name=6" evidence="1">
    <location>
        <begin position="239"/>
        <end position="259"/>
    </location>
</feature>
<feature type="topological domain" description="Extracellular" evidence="1">
    <location>
        <begin position="260"/>
        <end position="270"/>
    </location>
</feature>
<feature type="transmembrane region" description="Helical; Name=7" evidence="1">
    <location>
        <begin position="271"/>
        <end position="291"/>
    </location>
</feature>
<feature type="topological domain" description="Cytoplasmic" evidence="1">
    <location>
        <begin position="292"/>
        <end position="313"/>
    </location>
</feature>
<feature type="glycosylation site" description="N-linked (GlcNAc...) asparagine" evidence="1">
    <location>
        <position position="5"/>
    </location>
</feature>
<feature type="glycosylation site" description="N-linked (GlcNAc...) asparagine" evidence="1">
    <location>
        <position position="85"/>
    </location>
</feature>
<feature type="disulfide bond" evidence="2">
    <location>
        <begin position="98"/>
        <end position="190"/>
    </location>
</feature>
<feature type="sequence variant" id="VAR_053274" description="In dbSNP:rs17792778.">
    <original>S</original>
    <variation>G</variation>
    <location>
        <position position="73"/>
    </location>
</feature>
<protein>
    <recommendedName>
        <fullName>Olfactory receptor 10G3</fullName>
    </recommendedName>
    <alternativeName>
        <fullName>Olfactory receptor OR14-40</fullName>
    </alternativeName>
</protein>
<evidence type="ECO:0000255" key="1"/>
<evidence type="ECO:0000255" key="2">
    <source>
        <dbReference type="PROSITE-ProRule" id="PRU00521"/>
    </source>
</evidence>
<evidence type="ECO:0000305" key="3"/>
<keyword id="KW-1003">Cell membrane</keyword>
<keyword id="KW-1015">Disulfide bond</keyword>
<keyword id="KW-0297">G-protein coupled receptor</keyword>
<keyword id="KW-0325">Glycoprotein</keyword>
<keyword id="KW-0472">Membrane</keyword>
<keyword id="KW-0552">Olfaction</keyword>
<keyword id="KW-0675">Receptor</keyword>
<keyword id="KW-1185">Reference proteome</keyword>
<keyword id="KW-0716">Sensory transduction</keyword>
<keyword id="KW-0807">Transducer</keyword>
<keyword id="KW-0812">Transmembrane</keyword>
<keyword id="KW-1133">Transmembrane helix</keyword>
<comment type="function">
    <text evidence="3">Odorant receptor.</text>
</comment>
<comment type="subcellular location">
    <subcellularLocation>
        <location>Cell membrane</location>
        <topology>Multi-pass membrane protein</topology>
    </subcellularLocation>
</comment>
<comment type="similarity">
    <text evidence="2">Belongs to the G-protein coupled receptor 1 family.</text>
</comment>
<comment type="online information" name="Human Olfactory Receptor Data Exploratorium (HORDE)">
    <link uri="http://genome.weizmann.ac.il/horde/card/index/symbol:OR10G3"/>
</comment>
<proteinExistence type="inferred from homology"/>
<name>O10G3_HUMAN</name>
<organism>
    <name type="scientific">Homo sapiens</name>
    <name type="common">Human</name>
    <dbReference type="NCBI Taxonomy" id="9606"/>
    <lineage>
        <taxon>Eukaryota</taxon>
        <taxon>Metazoa</taxon>
        <taxon>Chordata</taxon>
        <taxon>Craniata</taxon>
        <taxon>Vertebrata</taxon>
        <taxon>Euteleostomi</taxon>
        <taxon>Mammalia</taxon>
        <taxon>Eutheria</taxon>
        <taxon>Euarchontoglires</taxon>
        <taxon>Primates</taxon>
        <taxon>Haplorrhini</taxon>
        <taxon>Catarrhini</taxon>
        <taxon>Hominidae</taxon>
        <taxon>Homo</taxon>
    </lineage>
</organism>
<accession>Q8NGC4</accession>
<accession>Q6IET7</accession>
<accession>Q96R77</accession>
<reference key="1">
    <citation type="submission" date="2001-07" db="EMBL/GenBank/DDBJ databases">
        <title>Genome-wide discovery and analysis of human seven transmembrane helix receptor genes.</title>
        <authorList>
            <person name="Suwa M."/>
            <person name="Sato T."/>
            <person name="Okouchi I."/>
            <person name="Arita M."/>
            <person name="Futami K."/>
            <person name="Matsumoto S."/>
            <person name="Tsutsumi S."/>
            <person name="Aburatani H."/>
            <person name="Asai K."/>
            <person name="Akiyama Y."/>
        </authorList>
    </citation>
    <scope>NUCLEOTIDE SEQUENCE [GENOMIC DNA]</scope>
</reference>
<reference key="2">
    <citation type="journal article" date="2002" name="Genomics">
        <title>DEFOG: a practical scheme for deciphering families of genes.</title>
        <authorList>
            <person name="Fuchs T."/>
            <person name="Malecova B."/>
            <person name="Linhart C."/>
            <person name="Sharan R."/>
            <person name="Khen M."/>
            <person name="Herwig R."/>
            <person name="Shmulevich D."/>
            <person name="Elkon R."/>
            <person name="Steinfath M."/>
            <person name="O'Brien J.K."/>
            <person name="Radelof U."/>
            <person name="Lehrach H."/>
            <person name="Lancet D."/>
            <person name="Shamir R."/>
        </authorList>
    </citation>
    <scope>NUCLEOTIDE SEQUENCE [GENOMIC DNA] OF 69-282</scope>
</reference>
<reference key="3">
    <citation type="journal article" date="2004" name="Proc. Natl. Acad. Sci. U.S.A.">
        <title>The human olfactory receptor gene family.</title>
        <authorList>
            <person name="Malnic B."/>
            <person name="Godfrey P.A."/>
            <person name="Buck L.B."/>
        </authorList>
    </citation>
    <scope>IDENTIFICATION</scope>
</reference>
<reference key="4">
    <citation type="journal article" date="2004" name="Proc. Natl. Acad. Sci. U.S.A.">
        <authorList>
            <person name="Malnic B."/>
            <person name="Godfrey P.A."/>
            <person name="Buck L.B."/>
        </authorList>
    </citation>
    <scope>ERRATUM OF PUBMED:14983052</scope>
</reference>
<dbReference type="EMBL" id="AB065893">
    <property type="protein sequence ID" value="BAC06109.1"/>
    <property type="molecule type" value="Genomic_DNA"/>
</dbReference>
<dbReference type="EMBL" id="AF399566">
    <property type="protein sequence ID" value="AAK95051.1"/>
    <property type="molecule type" value="Genomic_DNA"/>
</dbReference>
<dbReference type="EMBL" id="BK004525">
    <property type="protein sequence ID" value="DAA04923.1"/>
    <property type="molecule type" value="Genomic_DNA"/>
</dbReference>
<dbReference type="CCDS" id="CCDS32046.1"/>
<dbReference type="RefSeq" id="NP_001005465.1">
    <property type="nucleotide sequence ID" value="NM_001005465.2"/>
</dbReference>
<dbReference type="SMR" id="Q8NGC4"/>
<dbReference type="BioGRID" id="117735">
    <property type="interactions" value="7"/>
</dbReference>
<dbReference type="FunCoup" id="Q8NGC4">
    <property type="interactions" value="449"/>
</dbReference>
<dbReference type="STRING" id="9606.ENSP00000492973"/>
<dbReference type="GlyCosmos" id="Q8NGC4">
    <property type="glycosylation" value="2 sites, No reported glycans"/>
</dbReference>
<dbReference type="GlyGen" id="Q8NGC4">
    <property type="glycosylation" value="2 sites"/>
</dbReference>
<dbReference type="iPTMnet" id="Q8NGC4"/>
<dbReference type="PhosphoSitePlus" id="Q8NGC4"/>
<dbReference type="BioMuta" id="OR10G3"/>
<dbReference type="DMDM" id="38372665"/>
<dbReference type="jPOST" id="Q8NGC4"/>
<dbReference type="MassIVE" id="Q8NGC4"/>
<dbReference type="PaxDb" id="9606-ENSP00000302437"/>
<dbReference type="ProteomicsDB" id="73474"/>
<dbReference type="Antibodypedia" id="7569">
    <property type="antibodies" value="14 antibodies from 11 providers"/>
</dbReference>
<dbReference type="DNASU" id="26533"/>
<dbReference type="Ensembl" id="ENST00000641040.1">
    <property type="protein sequence ID" value="ENSP00000493245.1"/>
    <property type="gene ID" value="ENSG00000169208.3"/>
</dbReference>
<dbReference type="Ensembl" id="ENST00000641185.1">
    <property type="protein sequence ID" value="ENSP00000492973.1"/>
    <property type="gene ID" value="ENSG00000169208.3"/>
</dbReference>
<dbReference type="GeneID" id="26533"/>
<dbReference type="KEGG" id="hsa:26533"/>
<dbReference type="MANE-Select" id="ENST00000641040.1">
    <property type="protein sequence ID" value="ENSP00000493245.1"/>
    <property type="RefSeq nucleotide sequence ID" value="NM_001005465.2"/>
    <property type="RefSeq protein sequence ID" value="NP_001005465.1"/>
</dbReference>
<dbReference type="UCSC" id="uc010tmb.2">
    <property type="organism name" value="human"/>
</dbReference>
<dbReference type="AGR" id="HGNC:8171"/>
<dbReference type="CTD" id="26533"/>
<dbReference type="GeneCards" id="OR10G3"/>
<dbReference type="HGNC" id="HGNC:8171">
    <property type="gene designation" value="OR10G3"/>
</dbReference>
<dbReference type="HPA" id="ENSG00000169208">
    <property type="expression patterns" value="Not detected"/>
</dbReference>
<dbReference type="neXtProt" id="NX_Q8NGC4"/>
<dbReference type="OpenTargets" id="ENSG00000169208"/>
<dbReference type="PharmGKB" id="PA31970"/>
<dbReference type="VEuPathDB" id="HostDB:ENSG00000169208"/>
<dbReference type="eggNOG" id="ENOG502SHXU">
    <property type="taxonomic scope" value="Eukaryota"/>
</dbReference>
<dbReference type="GeneTree" id="ENSGT01050000244869"/>
<dbReference type="HOGENOM" id="CLU_012526_8_1_1"/>
<dbReference type="InParanoid" id="Q8NGC4"/>
<dbReference type="OMA" id="IYYVPCA"/>
<dbReference type="OrthoDB" id="9975554at2759"/>
<dbReference type="PAN-GO" id="Q8NGC4">
    <property type="GO annotations" value="1 GO annotation based on evolutionary models"/>
</dbReference>
<dbReference type="PhylomeDB" id="Q8NGC4"/>
<dbReference type="TreeFam" id="TF337251"/>
<dbReference type="PathwayCommons" id="Q8NGC4"/>
<dbReference type="Reactome" id="R-HSA-381753">
    <property type="pathway name" value="Olfactory Signaling Pathway"/>
</dbReference>
<dbReference type="Reactome" id="R-HSA-9752946">
    <property type="pathway name" value="Expression and translocation of olfactory receptors"/>
</dbReference>
<dbReference type="BioGRID-ORCS" id="26533">
    <property type="hits" value="9 hits in 746 CRISPR screens"/>
</dbReference>
<dbReference type="GeneWiki" id="OR10G3"/>
<dbReference type="GenomeRNAi" id="26533"/>
<dbReference type="Pharos" id="Q8NGC4">
    <property type="development level" value="Tdark"/>
</dbReference>
<dbReference type="PRO" id="PR:Q8NGC4"/>
<dbReference type="Proteomes" id="UP000005640">
    <property type="component" value="Chromosome 14"/>
</dbReference>
<dbReference type="RNAct" id="Q8NGC4">
    <property type="molecule type" value="protein"/>
</dbReference>
<dbReference type="Bgee" id="ENSG00000169208">
    <property type="expression patterns" value="Expressed in male germ line stem cell (sensu Vertebrata) in testis and 85 other cell types or tissues"/>
</dbReference>
<dbReference type="ExpressionAtlas" id="Q8NGC4">
    <property type="expression patterns" value="baseline and differential"/>
</dbReference>
<dbReference type="GO" id="GO:0005886">
    <property type="term" value="C:plasma membrane"/>
    <property type="evidence" value="ECO:0000318"/>
    <property type="project" value="GO_Central"/>
</dbReference>
<dbReference type="GO" id="GO:0004930">
    <property type="term" value="F:G protein-coupled receptor activity"/>
    <property type="evidence" value="ECO:0007669"/>
    <property type="project" value="UniProtKB-KW"/>
</dbReference>
<dbReference type="GO" id="GO:0004984">
    <property type="term" value="F:olfactory receptor activity"/>
    <property type="evidence" value="ECO:0000318"/>
    <property type="project" value="GO_Central"/>
</dbReference>
<dbReference type="GO" id="GO:0050911">
    <property type="term" value="P:detection of chemical stimulus involved in sensory perception of smell"/>
    <property type="evidence" value="ECO:0000318"/>
    <property type="project" value="GO_Central"/>
</dbReference>
<dbReference type="FunFam" id="1.20.1070.10:FF:000001">
    <property type="entry name" value="Olfactory receptor"/>
    <property type="match status" value="1"/>
</dbReference>
<dbReference type="Gene3D" id="1.20.1070.10">
    <property type="entry name" value="Rhodopsin 7-helix transmembrane proteins"/>
    <property type="match status" value="1"/>
</dbReference>
<dbReference type="InterPro" id="IPR000276">
    <property type="entry name" value="GPCR_Rhodpsn"/>
</dbReference>
<dbReference type="InterPro" id="IPR017452">
    <property type="entry name" value="GPCR_Rhodpsn_7TM"/>
</dbReference>
<dbReference type="InterPro" id="IPR000725">
    <property type="entry name" value="Olfact_rcpt"/>
</dbReference>
<dbReference type="PANTHER" id="PTHR26453">
    <property type="entry name" value="OLFACTORY RECEPTOR"/>
    <property type="match status" value="1"/>
</dbReference>
<dbReference type="Pfam" id="PF13853">
    <property type="entry name" value="7tm_4"/>
    <property type="match status" value="1"/>
</dbReference>
<dbReference type="PRINTS" id="PR00237">
    <property type="entry name" value="GPCRRHODOPSN"/>
</dbReference>
<dbReference type="PRINTS" id="PR00245">
    <property type="entry name" value="OLFACTORYR"/>
</dbReference>
<dbReference type="SUPFAM" id="SSF81321">
    <property type="entry name" value="Family A G protein-coupled receptor-like"/>
    <property type="match status" value="1"/>
</dbReference>
<dbReference type="PROSITE" id="PS50262">
    <property type="entry name" value="G_PROTEIN_RECEP_F1_2"/>
    <property type="match status" value="1"/>
</dbReference>
<gene>
    <name type="primary">OR10G3</name>
</gene>
<sequence length="313" mass="35055">MERINSTLLTAFILTGIPYPLRLRTLFFVFFFLIYILTQLGNLLILITVWADPRLHARPMYIFLGVLSVIDMSISSIIVPRLMMNFTLGVKPIPFGGCVAQLYFYHFLGSTQCFLYTLMAYDRYLAICQPLRYPVLMTAKLSALLVAGAWMAGSIHGALQAILTFRLPYCGPNQVDYFFCDIPAVLRLACADTTVNELVTFVDIGVVVASCFSLILLSYIQIIQAILRIHTADGRRRAFSTCGAHVTVVTVYYVPCAFIYLRPETNSPLDGAAALVPTAITPFLNPLIYTLRNQEVKLALKRMLRSPRTPSEV</sequence>